<gene>
    <name evidence="1" type="primary">rpl14</name>
</gene>
<proteinExistence type="inferred from homology"/>
<reference key="1">
    <citation type="journal article" date="2005" name="BMC Biol.">
        <title>The complete chloroplast DNA sequences of the charophycean green algae Staurastrum and Zygnema reveal that the chloroplast genome underwent extensive changes during the evolution of the Zygnematales.</title>
        <authorList>
            <person name="Turmel M."/>
            <person name="Otis C."/>
            <person name="Lemieux C."/>
        </authorList>
    </citation>
    <scope>NUCLEOTIDE SEQUENCE [LARGE SCALE GENOMIC DNA]</scope>
</reference>
<keyword id="KW-0150">Chloroplast</keyword>
<keyword id="KW-0934">Plastid</keyword>
<keyword id="KW-0687">Ribonucleoprotein</keyword>
<keyword id="KW-0689">Ribosomal protein</keyword>
<keyword id="KW-0694">RNA-binding</keyword>
<keyword id="KW-0699">rRNA-binding</keyword>
<feature type="chain" id="PRO_0000276371" description="Large ribosomal subunit protein uL14c">
    <location>
        <begin position="1"/>
        <end position="122"/>
    </location>
</feature>
<sequence length="122" mass="13558">MIQPQSYLNVADNSGARKLMCIRVLGSSNRKYAHIGDMVIAVVKETVPNMPLKKSEIVRAVIVRTRKGLKRDNGMVLRFDDNAAVVINQEGNPRGTRVFGPVARELRDLNFTKIVSLAPEVL</sequence>
<protein>
    <recommendedName>
        <fullName evidence="1">Large ribosomal subunit protein uL14c</fullName>
    </recommendedName>
    <alternativeName>
        <fullName evidence="2">50S ribosomal protein L14, chloroplastic</fullName>
    </alternativeName>
</protein>
<accession>Q32RN4</accession>
<name>RK14_ZYGCR</name>
<evidence type="ECO:0000255" key="1">
    <source>
        <dbReference type="HAMAP-Rule" id="MF_01367"/>
    </source>
</evidence>
<evidence type="ECO:0000305" key="2"/>
<comment type="function">
    <text evidence="1">Binds to 23S rRNA.</text>
</comment>
<comment type="subunit">
    <text evidence="1">Part of the 50S ribosomal subunit.</text>
</comment>
<comment type="subcellular location">
    <subcellularLocation>
        <location>Plastid</location>
        <location>Chloroplast</location>
    </subcellularLocation>
</comment>
<comment type="similarity">
    <text evidence="1">Belongs to the universal ribosomal protein uL14 family.</text>
</comment>
<dbReference type="EMBL" id="AY958086">
    <property type="protein sequence ID" value="AAX45852.1"/>
    <property type="molecule type" value="Genomic_DNA"/>
</dbReference>
<dbReference type="RefSeq" id="YP_636492.1">
    <property type="nucleotide sequence ID" value="NC_008117.1"/>
</dbReference>
<dbReference type="SMR" id="Q32RN4"/>
<dbReference type="GeneID" id="4108172"/>
<dbReference type="GO" id="GO:0009507">
    <property type="term" value="C:chloroplast"/>
    <property type="evidence" value="ECO:0007669"/>
    <property type="project" value="UniProtKB-SubCell"/>
</dbReference>
<dbReference type="GO" id="GO:0022625">
    <property type="term" value="C:cytosolic large ribosomal subunit"/>
    <property type="evidence" value="ECO:0007669"/>
    <property type="project" value="TreeGrafter"/>
</dbReference>
<dbReference type="GO" id="GO:0070180">
    <property type="term" value="F:large ribosomal subunit rRNA binding"/>
    <property type="evidence" value="ECO:0007669"/>
    <property type="project" value="TreeGrafter"/>
</dbReference>
<dbReference type="GO" id="GO:0003735">
    <property type="term" value="F:structural constituent of ribosome"/>
    <property type="evidence" value="ECO:0007669"/>
    <property type="project" value="InterPro"/>
</dbReference>
<dbReference type="GO" id="GO:0006412">
    <property type="term" value="P:translation"/>
    <property type="evidence" value="ECO:0007669"/>
    <property type="project" value="UniProtKB-UniRule"/>
</dbReference>
<dbReference type="CDD" id="cd00337">
    <property type="entry name" value="Ribosomal_uL14"/>
    <property type="match status" value="1"/>
</dbReference>
<dbReference type="FunFam" id="2.40.150.20:FF:000002">
    <property type="entry name" value="50S ribosomal protein L14, chloroplastic"/>
    <property type="match status" value="1"/>
</dbReference>
<dbReference type="Gene3D" id="2.40.150.20">
    <property type="entry name" value="Ribosomal protein L14"/>
    <property type="match status" value="1"/>
</dbReference>
<dbReference type="HAMAP" id="MF_01367">
    <property type="entry name" value="Ribosomal_uL14"/>
    <property type="match status" value="1"/>
</dbReference>
<dbReference type="InterPro" id="IPR000218">
    <property type="entry name" value="Ribosomal_uL14"/>
</dbReference>
<dbReference type="InterPro" id="IPR005745">
    <property type="entry name" value="Ribosomal_uL14_bac-type"/>
</dbReference>
<dbReference type="InterPro" id="IPR019972">
    <property type="entry name" value="Ribosomal_uL14_CS"/>
</dbReference>
<dbReference type="InterPro" id="IPR036853">
    <property type="entry name" value="Ribosomal_uL14_sf"/>
</dbReference>
<dbReference type="NCBIfam" id="TIGR01067">
    <property type="entry name" value="rplN_bact"/>
    <property type="match status" value="1"/>
</dbReference>
<dbReference type="PANTHER" id="PTHR11761">
    <property type="entry name" value="50S/60S RIBOSOMAL PROTEIN L14/L23"/>
    <property type="match status" value="1"/>
</dbReference>
<dbReference type="PANTHER" id="PTHR11761:SF3">
    <property type="entry name" value="LARGE RIBOSOMAL SUBUNIT PROTEIN UL14M"/>
    <property type="match status" value="1"/>
</dbReference>
<dbReference type="Pfam" id="PF00238">
    <property type="entry name" value="Ribosomal_L14"/>
    <property type="match status" value="1"/>
</dbReference>
<dbReference type="SMART" id="SM01374">
    <property type="entry name" value="Ribosomal_L14"/>
    <property type="match status" value="1"/>
</dbReference>
<dbReference type="SUPFAM" id="SSF50193">
    <property type="entry name" value="Ribosomal protein L14"/>
    <property type="match status" value="1"/>
</dbReference>
<dbReference type="PROSITE" id="PS00049">
    <property type="entry name" value="RIBOSOMAL_L14"/>
    <property type="match status" value="1"/>
</dbReference>
<geneLocation type="chloroplast"/>
<organism>
    <name type="scientific">Zygnema circumcarinatum</name>
    <name type="common">Green alga</name>
    <dbReference type="NCBI Taxonomy" id="35869"/>
    <lineage>
        <taxon>Eukaryota</taxon>
        <taxon>Viridiplantae</taxon>
        <taxon>Streptophyta</taxon>
        <taxon>Zygnematophyceae</taxon>
        <taxon>Zygnematophycidae</taxon>
        <taxon>Zygnematales</taxon>
        <taxon>Zygnemataceae</taxon>
        <taxon>Zygnema</taxon>
    </lineage>
</organism>